<evidence type="ECO:0000250" key="1"/>
<evidence type="ECO:0000255" key="2"/>
<evidence type="ECO:0000303" key="3">
    <source>
    </source>
</evidence>
<evidence type="ECO:0000305" key="4"/>
<evidence type="ECO:0000305" key="5">
    <source>
    </source>
</evidence>
<comment type="function">
    <text>Shows antibacterial activity against representative Gram-negative and Gram-positive bacterial species, and hemolytic activity.</text>
</comment>
<comment type="subcellular location">
    <subcellularLocation>
        <location evidence="5">Secreted</location>
    </subcellularLocation>
</comment>
<comment type="tissue specificity">
    <text evidence="5">Expressed by the skin glands.</text>
</comment>
<comment type="similarity">
    <text evidence="4">Belongs to the frog skin active peptide (FSAP) family. Brevinin subfamily.</text>
</comment>
<reference key="1">
    <citation type="journal article" date="1994" name="J. Biol. Chem.">
        <title>Antimicrobial peptides from skin secretions of Rana esculenta. Molecular cloning of cDNAs encoding esculentin and brevinins and isolation of new active peptides.</title>
        <authorList>
            <person name="Simmaco M."/>
            <person name="Mignogna G."/>
            <person name="Barra D."/>
            <person name="Bossa F."/>
        </authorList>
    </citation>
    <scope>NUCLEOTIDE SEQUENCE [MRNA]</scope>
    <source>
        <tissue>Skin</tissue>
    </source>
</reference>
<feature type="signal peptide" evidence="2">
    <location>
        <begin position="1"/>
        <end position="22"/>
    </location>
</feature>
<feature type="propeptide" id="PRO_0000003445" evidence="5">
    <location>
        <begin position="23"/>
        <end position="41"/>
    </location>
</feature>
<feature type="peptide" id="PRO_0000003446" description="Brevinin-2Ef" evidence="5">
    <location>
        <begin position="42"/>
        <end position="74"/>
    </location>
</feature>
<feature type="disulfide bond" evidence="1">
    <location>
        <begin position="68"/>
        <end position="74"/>
    </location>
</feature>
<proteinExistence type="inferred from homology"/>
<accession>P40842</accession>
<organism>
    <name type="scientific">Pelophylax lessonae</name>
    <name type="common">Pool frog</name>
    <name type="synonym">Rana lessonae</name>
    <dbReference type="NCBI Taxonomy" id="45623"/>
    <lineage>
        <taxon>Eukaryota</taxon>
        <taxon>Metazoa</taxon>
        <taxon>Chordata</taxon>
        <taxon>Craniata</taxon>
        <taxon>Vertebrata</taxon>
        <taxon>Euteleostomi</taxon>
        <taxon>Amphibia</taxon>
        <taxon>Batrachia</taxon>
        <taxon>Anura</taxon>
        <taxon>Neobatrachia</taxon>
        <taxon>Ranoidea</taxon>
        <taxon>Ranidae</taxon>
        <taxon>Pelophylax</taxon>
    </lineage>
</organism>
<sequence>MFTMKKSLLLIFFLGTISLSLCQEERNADDDDGEMTEEEKRGIMDTLKNLAKTAGKGALQSLVKMASCKLSGQC</sequence>
<protein>
    <recommendedName>
        <fullName evidence="3">Brevinin-2Ef</fullName>
    </recommendedName>
</protein>
<keyword id="KW-0878">Amphibian defense peptide</keyword>
<keyword id="KW-0044">Antibiotic</keyword>
<keyword id="KW-0929">Antimicrobial</keyword>
<keyword id="KW-0165">Cleavage on pair of basic residues</keyword>
<keyword id="KW-0204">Cytolysis</keyword>
<keyword id="KW-1015">Disulfide bond</keyword>
<keyword id="KW-0354">Hemolysis</keyword>
<keyword id="KW-0964">Secreted</keyword>
<keyword id="KW-0732">Signal</keyword>
<name>BR2F_PELLE</name>
<dbReference type="EMBL" id="X77832">
    <property type="protein sequence ID" value="CAA54843.1"/>
    <property type="molecule type" value="mRNA"/>
</dbReference>
<dbReference type="PIR" id="B53578">
    <property type="entry name" value="B53578"/>
</dbReference>
<dbReference type="SMR" id="P40842"/>
<dbReference type="TCDB" id="1.C.52.1.2">
    <property type="family name" value="the dermaseptin (dermaseptin) family"/>
</dbReference>
<dbReference type="GO" id="GO:0005576">
    <property type="term" value="C:extracellular region"/>
    <property type="evidence" value="ECO:0007669"/>
    <property type="project" value="UniProtKB-SubCell"/>
</dbReference>
<dbReference type="GO" id="GO:0042742">
    <property type="term" value="P:defense response to bacterium"/>
    <property type="evidence" value="ECO:0007669"/>
    <property type="project" value="UniProtKB-KW"/>
</dbReference>
<dbReference type="GO" id="GO:0031640">
    <property type="term" value="P:killing of cells of another organism"/>
    <property type="evidence" value="ECO:0007669"/>
    <property type="project" value="UniProtKB-KW"/>
</dbReference>
<dbReference type="InterPro" id="IPR012521">
    <property type="entry name" value="Antimicrobial_frog_2"/>
</dbReference>
<dbReference type="InterPro" id="IPR004275">
    <property type="entry name" value="Frog_antimicrobial_propeptide"/>
</dbReference>
<dbReference type="Pfam" id="PF08023">
    <property type="entry name" value="Antimicrobial_2"/>
    <property type="match status" value="1"/>
</dbReference>
<dbReference type="Pfam" id="PF03032">
    <property type="entry name" value="FSAP_sig_propep"/>
    <property type="match status" value="1"/>
</dbReference>